<keyword id="KW-0963">Cytoplasm</keyword>
<keyword id="KW-0547">Nucleotide-binding</keyword>
<keyword id="KW-0653">Protein transport</keyword>
<keyword id="KW-1185">Reference proteome</keyword>
<keyword id="KW-0694">RNA-binding</keyword>
<keyword id="KW-0813">Transport</keyword>
<protein>
    <recommendedName>
        <fullName>RNA-binding protein VTS1</fullName>
    </recommendedName>
</protein>
<feature type="chain" id="PRO_0000081449" description="RNA-binding protein VTS1">
    <location>
        <begin position="1"/>
        <end position="549"/>
    </location>
</feature>
<feature type="domain" description="SAM" evidence="3">
    <location>
        <begin position="473"/>
        <end position="534"/>
    </location>
</feature>
<feature type="region of interest" description="Disordered" evidence="4">
    <location>
        <begin position="1"/>
        <end position="57"/>
    </location>
</feature>
<feature type="region of interest" description="Disordered" evidence="4">
    <location>
        <begin position="113"/>
        <end position="155"/>
    </location>
</feature>
<feature type="region of interest" description="Disordered" evidence="4">
    <location>
        <begin position="181"/>
        <end position="206"/>
    </location>
</feature>
<feature type="region of interest" description="Disordered" evidence="4">
    <location>
        <begin position="256"/>
        <end position="293"/>
    </location>
</feature>
<feature type="region of interest" description="Disordered" evidence="4">
    <location>
        <begin position="371"/>
        <end position="422"/>
    </location>
</feature>
<feature type="region of interest" description="Disordered" evidence="4">
    <location>
        <begin position="435"/>
        <end position="470"/>
    </location>
</feature>
<feature type="compositionally biased region" description="Basic and acidic residues" evidence="4">
    <location>
        <begin position="1"/>
        <end position="13"/>
    </location>
</feature>
<feature type="compositionally biased region" description="Polar residues" evidence="4">
    <location>
        <begin position="16"/>
        <end position="57"/>
    </location>
</feature>
<feature type="compositionally biased region" description="Polar residues" evidence="4">
    <location>
        <begin position="113"/>
        <end position="127"/>
    </location>
</feature>
<feature type="compositionally biased region" description="Low complexity" evidence="4">
    <location>
        <begin position="128"/>
        <end position="140"/>
    </location>
</feature>
<feature type="compositionally biased region" description="Low complexity" evidence="4">
    <location>
        <begin position="189"/>
        <end position="206"/>
    </location>
</feature>
<feature type="compositionally biased region" description="Low complexity" evidence="4">
    <location>
        <begin position="379"/>
        <end position="415"/>
    </location>
</feature>
<feature type="compositionally biased region" description="Low complexity" evidence="4">
    <location>
        <begin position="435"/>
        <end position="469"/>
    </location>
</feature>
<organism>
    <name type="scientific">Candida glabrata (strain ATCC 2001 / BCRC 20586 / JCM 3761 / NBRC 0622 / NRRL Y-65 / CBS 138)</name>
    <name type="common">Yeast</name>
    <name type="synonym">Nakaseomyces glabratus</name>
    <dbReference type="NCBI Taxonomy" id="284593"/>
    <lineage>
        <taxon>Eukaryota</taxon>
        <taxon>Fungi</taxon>
        <taxon>Dikarya</taxon>
        <taxon>Ascomycota</taxon>
        <taxon>Saccharomycotina</taxon>
        <taxon>Saccharomycetes</taxon>
        <taxon>Saccharomycetales</taxon>
        <taxon>Saccharomycetaceae</taxon>
        <taxon>Nakaseomyces</taxon>
    </lineage>
</organism>
<evidence type="ECO:0000250" key="1">
    <source>
        <dbReference type="UniProtKB" id="J9VVN9"/>
    </source>
</evidence>
<evidence type="ECO:0000250" key="2">
    <source>
        <dbReference type="UniProtKB" id="Q08831"/>
    </source>
</evidence>
<evidence type="ECO:0000255" key="3">
    <source>
        <dbReference type="PROSITE-ProRule" id="PRU00184"/>
    </source>
</evidence>
<evidence type="ECO:0000256" key="4">
    <source>
        <dbReference type="SAM" id="MobiDB-lite"/>
    </source>
</evidence>
<evidence type="ECO:0000305" key="5"/>
<sequence>MLANKFDEMHHPVPDSSMNGNPLCNSSANVGQGNRNSNPIQSRGTGHSSSPIYNNPLRTAHPGAVLLSPQSSSLNIIDTTVGNAMSPTVPSSAASSIFFNDFGLDSSTNLNKSAMNANSNRPMTTIPLSSNSTSQSYTLSFQQENKKTNSNSTLNNVNNGLVTAGSVSNSHNNIFLDSFLSHDNTMQPNNSSNNNNNNNQNANNSLNFNTDVNQLCTWMSMLTANQQSVVMDNIISVLNESTLNYTKMKLDTMFGTTSSSPTSAEAMQNLGQPKESGNQNSNQNNIASPIPSTLDSVFANNSMKYLQSQSTSGSNHFHQAFNSKGSSMNWSSQASNIQNPAYDYLNDYRQRPKSAEPPLSHQTHYQPSNLSISQFKPQNSNGNSSNTNTNRNLNNSNNSNNNSTANNNNIGSNNTKRMNDITNSADVPVTSSFQNLTLNNQNGSTTTSSNNGNSSSGASSNSSMNPKSLTDPKLLNNIPIWLKTLRLHKYSDILNDLSWEKLIYLEDEDLLKRGVLALGARRKLLKAFTIVRDYKNRDLIDNSAYLNIK</sequence>
<accession>Q6FM94</accession>
<proteinExistence type="inferred from homology"/>
<comment type="function">
    <text evidence="2">RNA-binding protein involved in post-transcriptional regulation through transcript degradation.</text>
</comment>
<comment type="subunit">
    <text evidence="2">Monomer. Binds to RNA.</text>
</comment>
<comment type="subcellular location">
    <subcellularLocation>
        <location evidence="2">Cytoplasm</location>
        <location evidence="2">Cytosol</location>
    </subcellularLocation>
    <subcellularLocation>
        <location evidence="1">Cytoplasm</location>
        <location evidence="1">P-body</location>
    </subcellularLocation>
</comment>
<comment type="similarity">
    <text evidence="5">Belongs to the VTS1 family.</text>
</comment>
<dbReference type="EMBL" id="CR380957">
    <property type="protein sequence ID" value="CAG61613.1"/>
    <property type="molecule type" value="Genomic_DNA"/>
</dbReference>
<dbReference type="RefSeq" id="XP_448650.1">
    <property type="nucleotide sequence ID" value="XM_448650.1"/>
</dbReference>
<dbReference type="SMR" id="Q6FM94"/>
<dbReference type="FunCoup" id="Q6FM94">
    <property type="interactions" value="59"/>
</dbReference>
<dbReference type="STRING" id="284593.Q6FM94"/>
<dbReference type="EnsemblFungi" id="CAGL0K09922g-T">
    <property type="protein sequence ID" value="CAGL0K09922g-T-p1"/>
    <property type="gene ID" value="CAGL0K09922g"/>
</dbReference>
<dbReference type="KEGG" id="cgr:2890206"/>
<dbReference type="CGD" id="CAL0134917">
    <property type="gene designation" value="CAGL0K09922g"/>
</dbReference>
<dbReference type="VEuPathDB" id="FungiDB:CAGL0K09922g"/>
<dbReference type="eggNOG" id="KOG3791">
    <property type="taxonomic scope" value="Eukaryota"/>
</dbReference>
<dbReference type="HOGENOM" id="CLU_595905_0_0_1"/>
<dbReference type="InParanoid" id="Q6FM94"/>
<dbReference type="OMA" id="QQNTVMD"/>
<dbReference type="Proteomes" id="UP000002428">
    <property type="component" value="Chromosome K"/>
</dbReference>
<dbReference type="GO" id="GO:0005829">
    <property type="term" value="C:cytosol"/>
    <property type="evidence" value="ECO:0007669"/>
    <property type="project" value="UniProtKB-SubCell"/>
</dbReference>
<dbReference type="GO" id="GO:0000932">
    <property type="term" value="C:P-body"/>
    <property type="evidence" value="ECO:0007669"/>
    <property type="project" value="UniProtKB-SubCell"/>
</dbReference>
<dbReference type="GO" id="GO:0003729">
    <property type="term" value="F:mRNA binding"/>
    <property type="evidence" value="ECO:0007669"/>
    <property type="project" value="InterPro"/>
</dbReference>
<dbReference type="GO" id="GO:0000166">
    <property type="term" value="F:nucleotide binding"/>
    <property type="evidence" value="ECO:0007669"/>
    <property type="project" value="UniProtKB-KW"/>
</dbReference>
<dbReference type="GO" id="GO:0000289">
    <property type="term" value="P:nuclear-transcribed mRNA poly(A) tail shortening"/>
    <property type="evidence" value="ECO:0007669"/>
    <property type="project" value="TreeGrafter"/>
</dbReference>
<dbReference type="GO" id="GO:0015031">
    <property type="term" value="P:protein transport"/>
    <property type="evidence" value="ECO:0007669"/>
    <property type="project" value="UniProtKB-KW"/>
</dbReference>
<dbReference type="CDD" id="cd09556">
    <property type="entry name" value="SAM_VTS1_fungal"/>
    <property type="match status" value="1"/>
</dbReference>
<dbReference type="Gene3D" id="1.10.150.50">
    <property type="entry name" value="Transcription Factor, Ets-1"/>
    <property type="match status" value="1"/>
</dbReference>
<dbReference type="InterPro" id="IPR001660">
    <property type="entry name" value="SAM"/>
</dbReference>
<dbReference type="InterPro" id="IPR013761">
    <property type="entry name" value="SAM/pointed_sf"/>
</dbReference>
<dbReference type="InterPro" id="IPR050897">
    <property type="entry name" value="SMAUG/VTS1_RNA-bind"/>
</dbReference>
<dbReference type="InterPro" id="IPR037635">
    <property type="entry name" value="VTS1_SAM"/>
</dbReference>
<dbReference type="PANTHER" id="PTHR12515:SF5">
    <property type="entry name" value="PROTEIN SMAUG"/>
    <property type="match status" value="1"/>
</dbReference>
<dbReference type="PANTHER" id="PTHR12515">
    <property type="entry name" value="STERILE ALPHA MOTIF DOMAIN CONTAINING PROTEIN 4-RELATED"/>
    <property type="match status" value="1"/>
</dbReference>
<dbReference type="Pfam" id="PF07647">
    <property type="entry name" value="SAM_2"/>
    <property type="match status" value="1"/>
</dbReference>
<dbReference type="SMART" id="SM00454">
    <property type="entry name" value="SAM"/>
    <property type="match status" value="1"/>
</dbReference>
<dbReference type="SUPFAM" id="SSF47769">
    <property type="entry name" value="SAM/Pointed domain"/>
    <property type="match status" value="1"/>
</dbReference>
<dbReference type="PROSITE" id="PS50105">
    <property type="entry name" value="SAM_DOMAIN"/>
    <property type="match status" value="1"/>
</dbReference>
<reference key="1">
    <citation type="journal article" date="2004" name="Nature">
        <title>Genome evolution in yeasts.</title>
        <authorList>
            <person name="Dujon B."/>
            <person name="Sherman D."/>
            <person name="Fischer G."/>
            <person name="Durrens P."/>
            <person name="Casaregola S."/>
            <person name="Lafontaine I."/>
            <person name="de Montigny J."/>
            <person name="Marck C."/>
            <person name="Neuveglise C."/>
            <person name="Talla E."/>
            <person name="Goffard N."/>
            <person name="Frangeul L."/>
            <person name="Aigle M."/>
            <person name="Anthouard V."/>
            <person name="Babour A."/>
            <person name="Barbe V."/>
            <person name="Barnay S."/>
            <person name="Blanchin S."/>
            <person name="Beckerich J.-M."/>
            <person name="Beyne E."/>
            <person name="Bleykasten C."/>
            <person name="Boisrame A."/>
            <person name="Boyer J."/>
            <person name="Cattolico L."/>
            <person name="Confanioleri F."/>
            <person name="de Daruvar A."/>
            <person name="Despons L."/>
            <person name="Fabre E."/>
            <person name="Fairhead C."/>
            <person name="Ferry-Dumazet H."/>
            <person name="Groppi A."/>
            <person name="Hantraye F."/>
            <person name="Hennequin C."/>
            <person name="Jauniaux N."/>
            <person name="Joyet P."/>
            <person name="Kachouri R."/>
            <person name="Kerrest A."/>
            <person name="Koszul R."/>
            <person name="Lemaire M."/>
            <person name="Lesur I."/>
            <person name="Ma L."/>
            <person name="Muller H."/>
            <person name="Nicaud J.-M."/>
            <person name="Nikolski M."/>
            <person name="Oztas S."/>
            <person name="Ozier-Kalogeropoulos O."/>
            <person name="Pellenz S."/>
            <person name="Potier S."/>
            <person name="Richard G.-F."/>
            <person name="Straub M.-L."/>
            <person name="Suleau A."/>
            <person name="Swennen D."/>
            <person name="Tekaia F."/>
            <person name="Wesolowski-Louvel M."/>
            <person name="Westhof E."/>
            <person name="Wirth B."/>
            <person name="Zeniou-Meyer M."/>
            <person name="Zivanovic Y."/>
            <person name="Bolotin-Fukuhara M."/>
            <person name="Thierry A."/>
            <person name="Bouchier C."/>
            <person name="Caudron B."/>
            <person name="Scarpelli C."/>
            <person name="Gaillardin C."/>
            <person name="Weissenbach J."/>
            <person name="Wincker P."/>
            <person name="Souciet J.-L."/>
        </authorList>
    </citation>
    <scope>NUCLEOTIDE SEQUENCE [LARGE SCALE GENOMIC DNA]</scope>
    <source>
        <strain>ATCC 2001 / BCRC 20586 / JCM 3761 / NBRC 0622 / NRRL Y-65 / CBS 138</strain>
    </source>
</reference>
<name>VTS1_CANGA</name>
<gene>
    <name type="primary">VTS1</name>
    <name type="ordered locus">CAGL0K09922g</name>
</gene>